<keyword id="KW-1185">Reference proteome</keyword>
<sequence length="147" mass="16747">MVAQRVFWAAKTLQEMSPDEFESLCDGCGKCCLHKLEDEDTGDVYYTNVACRHLDHDRCRCTRYDQRQQLVAECVVLTPDSVRDTYWLPETCAYRLVDQGLPLFDWHPLISGDPDSVHTAGMSVAGKVVAENTVALDDLEDYIVRWV</sequence>
<accession>B3PKG8</accession>
<name>Y2436_CELJU</name>
<evidence type="ECO:0000255" key="1">
    <source>
        <dbReference type="HAMAP-Rule" id="MF_00676"/>
    </source>
</evidence>
<gene>
    <name type="ordered locus">CJA_2436</name>
</gene>
<organism>
    <name type="scientific">Cellvibrio japonicus (strain Ueda107)</name>
    <name type="common">Pseudomonas fluorescens subsp. cellulosa</name>
    <dbReference type="NCBI Taxonomy" id="498211"/>
    <lineage>
        <taxon>Bacteria</taxon>
        <taxon>Pseudomonadati</taxon>
        <taxon>Pseudomonadota</taxon>
        <taxon>Gammaproteobacteria</taxon>
        <taxon>Cellvibrionales</taxon>
        <taxon>Cellvibrionaceae</taxon>
        <taxon>Cellvibrio</taxon>
    </lineage>
</organism>
<comment type="similarity">
    <text evidence="1">Belongs to the UPF0260 family.</text>
</comment>
<feature type="chain" id="PRO_1000131619" description="UPF0260 protein CJA_2436">
    <location>
        <begin position="1"/>
        <end position="147"/>
    </location>
</feature>
<protein>
    <recommendedName>
        <fullName evidence="1">UPF0260 protein CJA_2436</fullName>
    </recommendedName>
</protein>
<dbReference type="EMBL" id="CP000934">
    <property type="protein sequence ID" value="ACE85298.1"/>
    <property type="molecule type" value="Genomic_DNA"/>
</dbReference>
<dbReference type="RefSeq" id="WP_012488033.1">
    <property type="nucleotide sequence ID" value="NC_010995.1"/>
</dbReference>
<dbReference type="STRING" id="498211.CJA_2436"/>
<dbReference type="KEGG" id="cja:CJA_2436"/>
<dbReference type="eggNOG" id="COG2983">
    <property type="taxonomic scope" value="Bacteria"/>
</dbReference>
<dbReference type="HOGENOM" id="CLU_109769_0_1_6"/>
<dbReference type="OrthoDB" id="9786855at2"/>
<dbReference type="Proteomes" id="UP000001036">
    <property type="component" value="Chromosome"/>
</dbReference>
<dbReference type="HAMAP" id="MF_00676">
    <property type="entry name" value="UPF0260"/>
    <property type="match status" value="1"/>
</dbReference>
<dbReference type="InterPro" id="IPR005358">
    <property type="entry name" value="Puta_zinc/iron-chelating_dom"/>
</dbReference>
<dbReference type="InterPro" id="IPR008228">
    <property type="entry name" value="UCP006173"/>
</dbReference>
<dbReference type="NCBIfam" id="NF003501">
    <property type="entry name" value="PRK05170.1-5"/>
    <property type="match status" value="1"/>
</dbReference>
<dbReference type="NCBIfam" id="NF003507">
    <property type="entry name" value="PRK05170.2-5"/>
    <property type="match status" value="1"/>
</dbReference>
<dbReference type="PANTHER" id="PTHR37421">
    <property type="entry name" value="UPF0260 PROTEIN YCGN"/>
    <property type="match status" value="1"/>
</dbReference>
<dbReference type="PANTHER" id="PTHR37421:SF1">
    <property type="entry name" value="UPF0260 PROTEIN YCGN"/>
    <property type="match status" value="1"/>
</dbReference>
<dbReference type="Pfam" id="PF03692">
    <property type="entry name" value="CxxCxxCC"/>
    <property type="match status" value="1"/>
</dbReference>
<dbReference type="PIRSF" id="PIRSF006173">
    <property type="entry name" value="UCP006173"/>
    <property type="match status" value="1"/>
</dbReference>
<proteinExistence type="inferred from homology"/>
<reference key="1">
    <citation type="journal article" date="2008" name="J. Bacteriol.">
        <title>Insights into plant cell wall degradation from the genome sequence of the soil bacterium Cellvibrio japonicus.</title>
        <authorList>
            <person name="DeBoy R.T."/>
            <person name="Mongodin E.F."/>
            <person name="Fouts D.E."/>
            <person name="Tailford L.E."/>
            <person name="Khouri H."/>
            <person name="Emerson J.B."/>
            <person name="Mohamoud Y."/>
            <person name="Watkins K."/>
            <person name="Henrissat B."/>
            <person name="Gilbert H.J."/>
            <person name="Nelson K.E."/>
        </authorList>
    </citation>
    <scope>NUCLEOTIDE SEQUENCE [LARGE SCALE GENOMIC DNA]</scope>
    <source>
        <strain>Ueda107</strain>
    </source>
</reference>